<dbReference type="EMBL" id="GG662707">
    <property type="protein sequence ID" value="EAR95092.1"/>
    <property type="molecule type" value="Genomic_DNA"/>
</dbReference>
<dbReference type="RefSeq" id="XP_001015337.1">
    <property type="nucleotide sequence ID" value="XM_001015337.1"/>
</dbReference>
<dbReference type="STRING" id="312017.Q23F13"/>
<dbReference type="EnsemblProtists" id="EAR95092">
    <property type="protein sequence ID" value="EAR95092"/>
    <property type="gene ID" value="TTHERM_00641200"/>
</dbReference>
<dbReference type="GeneID" id="7831652"/>
<dbReference type="KEGG" id="tet:TTHERM_00641200"/>
<dbReference type="eggNOG" id="ENOG502QSEC">
    <property type="taxonomic scope" value="Eukaryota"/>
</dbReference>
<dbReference type="HOGENOM" id="CLU_003251_0_0_1"/>
<dbReference type="InParanoid" id="Q23F13"/>
<dbReference type="OMA" id="PMESKCH"/>
<dbReference type="OrthoDB" id="441013at2759"/>
<dbReference type="Proteomes" id="UP000009168">
    <property type="component" value="Unassembled WGS sequence"/>
</dbReference>
<dbReference type="GO" id="GO:0097729">
    <property type="term" value="C:9+2 motile cilium"/>
    <property type="evidence" value="ECO:0000314"/>
    <property type="project" value="UniProtKB"/>
</dbReference>
<dbReference type="GO" id="GO:0003341">
    <property type="term" value="P:cilium movement"/>
    <property type="evidence" value="ECO:0000315"/>
    <property type="project" value="UniProtKB"/>
</dbReference>
<dbReference type="GO" id="GO:0044782">
    <property type="term" value="P:cilium organization"/>
    <property type="evidence" value="ECO:0000315"/>
    <property type="project" value="UniProtKB"/>
</dbReference>
<dbReference type="Gene3D" id="3.50.50.100">
    <property type="match status" value="1"/>
</dbReference>
<dbReference type="InterPro" id="IPR038884">
    <property type="entry name" value="CFAP61"/>
</dbReference>
<dbReference type="InterPro" id="IPR056299">
    <property type="entry name" value="CFAP61_dimer"/>
</dbReference>
<dbReference type="InterPro" id="IPR032151">
    <property type="entry name" value="CFAP61_N"/>
</dbReference>
<dbReference type="InterPro" id="IPR036188">
    <property type="entry name" value="FAD/NAD-bd_sf"/>
</dbReference>
<dbReference type="PANTHER" id="PTHR21178">
    <property type="entry name" value="CILIA- AND FLAGELLA-ASSOCIATED PROTEIN 61"/>
    <property type="match status" value="1"/>
</dbReference>
<dbReference type="PANTHER" id="PTHR21178:SF8">
    <property type="entry name" value="CILIA- AND FLAGELLA-ASSOCIATED PROTEIN 61"/>
    <property type="match status" value="1"/>
</dbReference>
<dbReference type="Pfam" id="PF23150">
    <property type="entry name" value="CFAP61_dimer"/>
    <property type="match status" value="1"/>
</dbReference>
<dbReference type="Pfam" id="PF16092">
    <property type="entry name" value="CFAP61_N"/>
    <property type="match status" value="1"/>
</dbReference>
<dbReference type="SUPFAM" id="SSF51905">
    <property type="entry name" value="FAD/NAD(P)-binding domain"/>
    <property type="match status" value="1"/>
</dbReference>
<reference key="1">
    <citation type="journal article" date="2006" name="PLoS Biol.">
        <title>Macronuclear genome sequence of the ciliate Tetrahymena thermophila, a model eukaryote.</title>
        <authorList>
            <person name="Eisen J.A."/>
            <person name="Coyne R.S."/>
            <person name="Wu M."/>
            <person name="Wu D."/>
            <person name="Thiagarajan M."/>
            <person name="Wortman J.R."/>
            <person name="Badger J.H."/>
            <person name="Ren Q."/>
            <person name="Amedeo P."/>
            <person name="Jones K.M."/>
            <person name="Tallon L.J."/>
            <person name="Delcher A.L."/>
            <person name="Salzberg S.L."/>
            <person name="Silva J.C."/>
            <person name="Haas B.J."/>
            <person name="Majoros W.H."/>
            <person name="Farzad M."/>
            <person name="Carlton J.M."/>
            <person name="Smith R.K. Jr."/>
            <person name="Garg J."/>
            <person name="Pearlman R.E."/>
            <person name="Karrer K.M."/>
            <person name="Sun L."/>
            <person name="Manning G."/>
            <person name="Elde N.C."/>
            <person name="Turkewitz A.P."/>
            <person name="Asai D.J."/>
            <person name="Wilkes D.E."/>
            <person name="Wang Y."/>
            <person name="Cai H."/>
            <person name="Collins K."/>
            <person name="Stewart B.A."/>
            <person name="Lee S.R."/>
            <person name="Wilamowska K."/>
            <person name="Weinberg Z."/>
            <person name="Ruzzo W.L."/>
            <person name="Wloga D."/>
            <person name="Gaertig J."/>
            <person name="Frankel J."/>
            <person name="Tsao C.-C."/>
            <person name="Gorovsky M.A."/>
            <person name="Keeling P.J."/>
            <person name="Waller R.F."/>
            <person name="Patron N.J."/>
            <person name="Cherry J.M."/>
            <person name="Stover N.A."/>
            <person name="Krieger C.J."/>
            <person name="del Toro C."/>
            <person name="Ryder H.F."/>
            <person name="Williamson S.C."/>
            <person name="Barbeau R.A."/>
            <person name="Hamilton E.P."/>
            <person name="Orias E."/>
        </authorList>
    </citation>
    <scope>NUCLEOTIDE SEQUENCE [LARGE SCALE GENOMIC DNA]</scope>
    <source>
        <strain>SB210</strain>
    </source>
</reference>
<reference key="2">
    <citation type="journal article" date="2015" name="Mol. Biol. Cell">
        <title>The CSC proteins FAP61 and FAP251 build the basal substructures of radial spoke 3 in cilia.</title>
        <authorList>
            <person name="Urbanska P."/>
            <person name="Song K."/>
            <person name="Joachimiak E."/>
            <person name="Krzemien-Ojak L."/>
            <person name="Koprowski P."/>
            <person name="Hennessey T."/>
            <person name="Jerka-Dziadosz M."/>
            <person name="Fabczak H."/>
            <person name="Gaertig J."/>
            <person name="Nicastro D."/>
            <person name="Wloga D."/>
        </authorList>
    </citation>
    <scope>FUNCTION</scope>
    <scope>DISRUPTION PHENOTYPE</scope>
    <scope>SUBCELLULAR LOCATION</scope>
</reference>
<gene>
    <name evidence="4" type="primary">CFAP61</name>
    <name evidence="3" type="synonym">FAP61</name>
    <name evidence="5" type="ORF">TTHERM_00641200</name>
</gene>
<organism>
    <name type="scientific">Tetrahymena thermophila (strain SB210)</name>
    <dbReference type="NCBI Taxonomy" id="312017"/>
    <lineage>
        <taxon>Eukaryota</taxon>
        <taxon>Sar</taxon>
        <taxon>Alveolata</taxon>
        <taxon>Ciliophora</taxon>
        <taxon>Intramacronucleata</taxon>
        <taxon>Oligohymenophorea</taxon>
        <taxon>Hymenostomatida</taxon>
        <taxon>Tetrahymenina</taxon>
        <taxon>Tetrahymenidae</taxon>
        <taxon>Tetrahymena</taxon>
    </lineage>
</organism>
<keyword id="KW-0966">Cell projection</keyword>
<keyword id="KW-0175">Coiled coil</keyword>
<keyword id="KW-1185">Reference proteome</keyword>
<comment type="function">
    <text evidence="2">As component of a spoke-associated complex, regulates ciliary mobility by mediating a stable and functional assembly of the radial spoke 3 (RS3).</text>
</comment>
<comment type="subcellular location">
    <subcellularLocation>
        <location evidence="2">Cell projection</location>
        <location evidence="2">Cilium</location>
    </subcellularLocation>
</comment>
<comment type="disruption phenotype">
    <text evidence="2">Knockout cells show deficiencies in cell multiplication and ciliary functions. Mutants move with greatly reduced velocities, have disturbed waveform of beating cilia and have stiffer cilia (PubMed:25694453). Mutant cilia lack an adjacent portion of the radial spoke 3 stem region (PubMed:25694453).</text>
</comment>
<evidence type="ECO:0000256" key="1">
    <source>
        <dbReference type="SAM" id="MobiDB-lite"/>
    </source>
</evidence>
<evidence type="ECO:0000269" key="2">
    <source>
    </source>
</evidence>
<evidence type="ECO:0000303" key="3">
    <source>
    </source>
</evidence>
<evidence type="ECO:0000305" key="4"/>
<evidence type="ECO:0000312" key="5">
    <source>
        <dbReference type="EMBL" id="EAR95092.1"/>
    </source>
</evidence>
<accession>Q23F13</accession>
<feature type="chain" id="PRO_0000439531" description="Cilia- and flagella-associated protein 61">
    <location>
        <begin position="1"/>
        <end position="1699"/>
    </location>
</feature>
<feature type="region of interest" description="Disordered" evidence="1">
    <location>
        <begin position="1"/>
        <end position="23"/>
    </location>
</feature>
<feature type="region of interest" description="Disordered" evidence="1">
    <location>
        <begin position="489"/>
        <end position="515"/>
    </location>
</feature>
<feature type="region of interest" description="Disordered" evidence="1">
    <location>
        <begin position="1340"/>
        <end position="1365"/>
    </location>
</feature>
<feature type="compositionally biased region" description="Polar residues" evidence="1">
    <location>
        <begin position="1"/>
        <end position="22"/>
    </location>
</feature>
<feature type="compositionally biased region" description="Basic residues" evidence="1">
    <location>
        <begin position="489"/>
        <end position="503"/>
    </location>
</feature>
<feature type="compositionally biased region" description="Basic and acidic residues" evidence="1">
    <location>
        <begin position="504"/>
        <end position="515"/>
    </location>
</feature>
<feature type="compositionally biased region" description="Basic and acidic residues" evidence="1">
    <location>
        <begin position="1340"/>
        <end position="1359"/>
    </location>
</feature>
<sequence length="1699" mass="198392">MYSNNQLDNPNHSRSQYRNGDQSGIYAGSDEEFQVLVRKSDLDDVDEVLKIIAQHEREANDLLYDYPNLLSLFEKNYLSVTILNQQQQIIGAAVFNDFPQGLTGQIDFQHENFWENWIFDAFNFDESICITPFNTLWMTFFFVAKDQYKFSQEEELIICQKVFQNVYATLPQLEGILFLKRGETMEDNGAQAQISSILENIFIEVPVKDRDIIKRVRGIHLNSEVFYSPKHACQEIIEIRMAREQDHDDLAEIFNRQSEVLTAQFGEFFIADLIATQNLTRRGTRKFLNNGKAIVGQVRDKAVGLMSISTDIDYKFLAQCFELETYDNLFKPDFMEAIQNKRDDIRRENQYREEDQYQEIVKKMNEERMKSHFIGQRMTLQQHCREKEQEIVMKIDEIINNDAIQKNLTKKQVEEFLDEWLRGYELHQPSDLFYQYPHIFPNTQSIILTPRQLLIETLEFFGLPQHYMNGAGHWKDWVQKKMEEKRIAQLKRPQKKVTKRPKRQKEEDKKEDEFKPPSYFDLTPFQSAFKKFLAVNPEGRTIFRQKIEASMKVIKMMFCNENGEMKEERHVDLNDLGNELNKQKMDIAPEVCENLASFLECFGEIKYEEEIIMVNPPKEDTNQNAKIAQTKKMFASEQTESKPIPKLLKKTSFQEFFDAVYKMKEFDIMMNRLDITKSTTLKAEVSQIVKEEAQQEKAKQEKRRIERSPNPYDDYVKNLKDLDSIPEVPIDAQNAIVINLFCIDENFESRSLDFVEYAFSIFGDRDYIILTQPFTVPETTLLQQFIKIPMKKNSTFDHVLYIYHKDCLLSNTLFIRKSKLEDMQYVAPLFSNLINKQQIYDDTLEAITQTASRKVAFSVFCDQSLIGIYVVSKNVNLDYYISHFCVQDHIILKEHPMTCHTKLIHTALNPLFTKNTRFILKEILRLMNKTCMYFEVQEKTLLPDVFNELVFVRARQFPHFLKRKWDFEHDKEHFERAGDLTEVQDGKRDAFDQEQAPFSLSVITKKMMSSVKVNNNTRIVVVGASDTGISFIESLLSVKDINFTHITLLAPGGIMTMHINLPGDQLKALSTNYTLEELKNLMLDARVNVLDAKMVELDKKGKKIKLDKNAELPYDYLVNTVGLIDTELQNRRLISTGLFSSPYYQQLLDKYGRDRAQIEEGAPPIFGQHPVYGNYVQGVYSIDDPYLYEEFKKTGKKDSNIDLLTRKKRPQSITIYGRTLHTIAFISGMVNRGVHPNRIHYVIPPKVFETQVQFKNNTERLIYEDKRINDPDPFDDPSVEQKIFEFMESKGIQVHKGYNLHQIDVDEETRICQGVVFRKKADNYEEIIQQIEIKKQQILERDANSENADKGFDDTQSRDGDEENQPITLEQEIEELERNKFDDIEITSRFLVTSGLVDIDKEIFYIIHENGLVYNGRLIVKSNFQTTEKDIFCCGKICEFSQRYKRLSIGRSLRLDKYNGRELGQKLAKCLLDSLDLGYLTDQIYSLGELPNLYMPIGIGAFLPGDLFYYHIKKNDYARPSKTMEAEDNRQDIVSDNIDQKQQIGHYIKFKFDNNGIIDQVTYLGTEPVSVQSLVSFVGLSEKCLNQLDVRFKNGLIPNISEFLSENWAIGLYHEWFSEFRHITKMEMLQSENIQQILDEAAKYAQGGGFLDPEFIEKIKAKISPEIISQIQQGTLDFIRENQNHLPMYYVPPKKVNVD</sequence>
<proteinExistence type="predicted"/>
<name>CFA61_TETTS</name>
<protein>
    <recommendedName>
        <fullName evidence="4">Cilia- and flagella-associated protein 61</fullName>
        <shortName evidence="4">CFAP61</shortName>
    </recommendedName>
    <alternativeName>
        <fullName evidence="3">Flagellar-associated protein 61</fullName>
    </alternativeName>
</protein>